<organism>
    <name type="scientific">Prochlorococcus marinus (strain MIT 9211)</name>
    <dbReference type="NCBI Taxonomy" id="93059"/>
    <lineage>
        <taxon>Bacteria</taxon>
        <taxon>Bacillati</taxon>
        <taxon>Cyanobacteriota</taxon>
        <taxon>Cyanophyceae</taxon>
        <taxon>Synechococcales</taxon>
        <taxon>Prochlorococcaceae</taxon>
        <taxon>Prochlorococcus</taxon>
    </lineage>
</organism>
<proteinExistence type="inferred from homology"/>
<feature type="chain" id="PRO_0000365912" description="ATP synthase subunit c">
    <location>
        <begin position="1"/>
        <end position="82"/>
    </location>
</feature>
<feature type="transmembrane region" description="Helical" evidence="1">
    <location>
        <begin position="7"/>
        <end position="27"/>
    </location>
</feature>
<feature type="transmembrane region" description="Helical" evidence="1">
    <location>
        <begin position="57"/>
        <end position="77"/>
    </location>
</feature>
<feature type="site" description="Reversibly protonated during proton transport" evidence="1">
    <location>
        <position position="61"/>
    </location>
</feature>
<comment type="function">
    <text evidence="1">F(1)F(0) ATP synthase produces ATP from ADP in the presence of a proton or sodium gradient. F-type ATPases consist of two structural domains, F(1) containing the extramembraneous catalytic core and F(0) containing the membrane proton channel, linked together by a central stalk and a peripheral stalk. During catalysis, ATP synthesis in the catalytic domain of F(1) is coupled via a rotary mechanism of the central stalk subunits to proton translocation.</text>
</comment>
<comment type="function">
    <text evidence="1">Key component of the F(0) channel; it plays a direct role in translocation across the membrane. A homomeric c-ring of between 10-14 subunits forms the central stalk rotor element with the F(1) delta and epsilon subunits.</text>
</comment>
<comment type="subunit">
    <text evidence="1">F-type ATPases have 2 components, F(1) - the catalytic core - and F(0) - the membrane proton channel. F(1) has five subunits: alpha(3), beta(3), gamma(1), delta(1), epsilon(1). F(0) has four main subunits: a(1), b(1), b'(1) and c(10-14). The alpha and beta chains form an alternating ring which encloses part of the gamma chain. F(1) is attached to F(0) by a central stalk formed by the gamma and epsilon chains, while a peripheral stalk is formed by the delta, b and b' chains.</text>
</comment>
<comment type="subcellular location">
    <subcellularLocation>
        <location evidence="1">Cellular thylakoid membrane</location>
        <topology evidence="1">Multi-pass membrane protein</topology>
    </subcellularLocation>
</comment>
<comment type="similarity">
    <text evidence="1">Belongs to the ATPase C chain family.</text>
</comment>
<comment type="sequence caution" evidence="2">
    <conflict type="erroneous initiation">
        <sequence resource="EMBL-CDS" id="ABX09505"/>
    </conflict>
</comment>
<evidence type="ECO:0000255" key="1">
    <source>
        <dbReference type="HAMAP-Rule" id="MF_01396"/>
    </source>
</evidence>
<evidence type="ECO:0000305" key="2"/>
<dbReference type="EMBL" id="CP000878">
    <property type="protein sequence ID" value="ABX09505.1"/>
    <property type="status" value="ALT_INIT"/>
    <property type="molecule type" value="Genomic_DNA"/>
</dbReference>
<dbReference type="RefSeq" id="WP_011125758.1">
    <property type="nucleotide sequence ID" value="NC_009976.1"/>
</dbReference>
<dbReference type="SMR" id="A9BCE3"/>
<dbReference type="STRING" id="93059.P9211_15741"/>
<dbReference type="KEGG" id="pmj:P9211_15741"/>
<dbReference type="eggNOG" id="COG0636">
    <property type="taxonomic scope" value="Bacteria"/>
</dbReference>
<dbReference type="HOGENOM" id="CLU_148047_2_0_3"/>
<dbReference type="OrthoDB" id="9810379at2"/>
<dbReference type="Proteomes" id="UP000000788">
    <property type="component" value="Chromosome"/>
</dbReference>
<dbReference type="GO" id="GO:0031676">
    <property type="term" value="C:plasma membrane-derived thylakoid membrane"/>
    <property type="evidence" value="ECO:0007669"/>
    <property type="project" value="UniProtKB-SubCell"/>
</dbReference>
<dbReference type="GO" id="GO:0045259">
    <property type="term" value="C:proton-transporting ATP synthase complex"/>
    <property type="evidence" value="ECO:0007669"/>
    <property type="project" value="UniProtKB-KW"/>
</dbReference>
<dbReference type="GO" id="GO:0033177">
    <property type="term" value="C:proton-transporting two-sector ATPase complex, proton-transporting domain"/>
    <property type="evidence" value="ECO:0007669"/>
    <property type="project" value="InterPro"/>
</dbReference>
<dbReference type="GO" id="GO:0008289">
    <property type="term" value="F:lipid binding"/>
    <property type="evidence" value="ECO:0007669"/>
    <property type="project" value="UniProtKB-KW"/>
</dbReference>
<dbReference type="GO" id="GO:0046933">
    <property type="term" value="F:proton-transporting ATP synthase activity, rotational mechanism"/>
    <property type="evidence" value="ECO:0007669"/>
    <property type="project" value="UniProtKB-UniRule"/>
</dbReference>
<dbReference type="CDD" id="cd18183">
    <property type="entry name" value="ATP-synt_Fo_c_ATPH"/>
    <property type="match status" value="1"/>
</dbReference>
<dbReference type="FunFam" id="1.20.20.10:FF:000001">
    <property type="entry name" value="ATP synthase subunit c, chloroplastic"/>
    <property type="match status" value="1"/>
</dbReference>
<dbReference type="Gene3D" id="1.20.20.10">
    <property type="entry name" value="F1F0 ATP synthase subunit C"/>
    <property type="match status" value="1"/>
</dbReference>
<dbReference type="HAMAP" id="MF_01396">
    <property type="entry name" value="ATP_synth_c_bact"/>
    <property type="match status" value="1"/>
</dbReference>
<dbReference type="InterPro" id="IPR005953">
    <property type="entry name" value="ATP_synth_csu_bac/chlpt"/>
</dbReference>
<dbReference type="InterPro" id="IPR000454">
    <property type="entry name" value="ATP_synth_F0_csu"/>
</dbReference>
<dbReference type="InterPro" id="IPR020537">
    <property type="entry name" value="ATP_synth_F0_csu_DDCD_BS"/>
</dbReference>
<dbReference type="InterPro" id="IPR038662">
    <property type="entry name" value="ATP_synth_F0_csu_sf"/>
</dbReference>
<dbReference type="InterPro" id="IPR002379">
    <property type="entry name" value="ATPase_proteolipid_c-like_dom"/>
</dbReference>
<dbReference type="InterPro" id="IPR035921">
    <property type="entry name" value="F/V-ATP_Csub_sf"/>
</dbReference>
<dbReference type="NCBIfam" id="TIGR01260">
    <property type="entry name" value="ATP_synt_c"/>
    <property type="match status" value="1"/>
</dbReference>
<dbReference type="NCBIfam" id="NF005608">
    <property type="entry name" value="PRK07354.1"/>
    <property type="match status" value="1"/>
</dbReference>
<dbReference type="PANTHER" id="PTHR10031">
    <property type="entry name" value="ATP SYNTHASE LIPID-BINDING PROTEIN, MITOCHONDRIAL"/>
    <property type="match status" value="1"/>
</dbReference>
<dbReference type="PANTHER" id="PTHR10031:SF0">
    <property type="entry name" value="ATPASE PROTEIN 9"/>
    <property type="match status" value="1"/>
</dbReference>
<dbReference type="Pfam" id="PF00137">
    <property type="entry name" value="ATP-synt_C"/>
    <property type="match status" value="1"/>
</dbReference>
<dbReference type="PRINTS" id="PR00124">
    <property type="entry name" value="ATPASEC"/>
</dbReference>
<dbReference type="SUPFAM" id="SSF81333">
    <property type="entry name" value="F1F0 ATP synthase subunit C"/>
    <property type="match status" value="1"/>
</dbReference>
<dbReference type="PROSITE" id="PS00605">
    <property type="entry name" value="ATPASE_C"/>
    <property type="match status" value="1"/>
</dbReference>
<protein>
    <recommendedName>
        <fullName evidence="1">ATP synthase subunit c</fullName>
    </recommendedName>
    <alternativeName>
        <fullName evidence="1">ATP synthase F(0) sector subunit c</fullName>
    </alternativeName>
    <alternativeName>
        <fullName evidence="1">F-type ATPase subunit c</fullName>
        <shortName evidence="1">F-ATPase subunit c</shortName>
    </alternativeName>
    <alternativeName>
        <fullName evidence="1">Lipid-binding protein</fullName>
    </alternativeName>
</protein>
<keyword id="KW-0066">ATP synthesis</keyword>
<keyword id="KW-0138">CF(0)</keyword>
<keyword id="KW-0375">Hydrogen ion transport</keyword>
<keyword id="KW-0406">Ion transport</keyword>
<keyword id="KW-0446">Lipid-binding</keyword>
<keyword id="KW-0472">Membrane</keyword>
<keyword id="KW-1185">Reference proteome</keyword>
<keyword id="KW-0793">Thylakoid</keyword>
<keyword id="KW-0812">Transmembrane</keyword>
<keyword id="KW-1133">Transmembrane helix</keyword>
<keyword id="KW-0813">Transport</keyword>
<sequence>MDSITTAASVVAAGLAVGLGAIGPGIGQGSAAQGAVEGIARQPEAEGKIRGTLLLSFAFMESLTIYGLVVALVLLFANPFAG</sequence>
<gene>
    <name evidence="1" type="primary">atpE</name>
    <name evidence="1" type="synonym">atpH</name>
    <name type="ordered locus">P9211_15741</name>
</gene>
<reference key="1">
    <citation type="journal article" date="2007" name="PLoS Genet.">
        <title>Patterns and implications of gene gain and loss in the evolution of Prochlorococcus.</title>
        <authorList>
            <person name="Kettler G.C."/>
            <person name="Martiny A.C."/>
            <person name="Huang K."/>
            <person name="Zucker J."/>
            <person name="Coleman M.L."/>
            <person name="Rodrigue S."/>
            <person name="Chen F."/>
            <person name="Lapidus A."/>
            <person name="Ferriera S."/>
            <person name="Johnson J."/>
            <person name="Steglich C."/>
            <person name="Church G.M."/>
            <person name="Richardson P."/>
            <person name="Chisholm S.W."/>
        </authorList>
    </citation>
    <scope>NUCLEOTIDE SEQUENCE [LARGE SCALE GENOMIC DNA]</scope>
    <source>
        <strain>MIT 9211</strain>
    </source>
</reference>
<name>ATPL_PROM4</name>
<accession>A9BCE3</accession>